<keyword id="KW-0687">Ribonucleoprotein</keyword>
<keyword id="KW-0689">Ribosomal protein</keyword>
<dbReference type="EMBL" id="CP000487">
    <property type="protein sequence ID" value="ABK82017.1"/>
    <property type="molecule type" value="Genomic_DNA"/>
</dbReference>
<dbReference type="RefSeq" id="WP_002848923.1">
    <property type="nucleotide sequence ID" value="NC_008599.1"/>
</dbReference>
<dbReference type="SMR" id="A0RNF8"/>
<dbReference type="GeneID" id="61064396"/>
<dbReference type="KEGG" id="cff:CFF8240_0551"/>
<dbReference type="eggNOG" id="COG0230">
    <property type="taxonomic scope" value="Bacteria"/>
</dbReference>
<dbReference type="HOGENOM" id="CLU_129938_2_0_7"/>
<dbReference type="Proteomes" id="UP000000760">
    <property type="component" value="Chromosome"/>
</dbReference>
<dbReference type="GO" id="GO:1990904">
    <property type="term" value="C:ribonucleoprotein complex"/>
    <property type="evidence" value="ECO:0007669"/>
    <property type="project" value="UniProtKB-KW"/>
</dbReference>
<dbReference type="GO" id="GO:0005840">
    <property type="term" value="C:ribosome"/>
    <property type="evidence" value="ECO:0007669"/>
    <property type="project" value="UniProtKB-KW"/>
</dbReference>
<dbReference type="GO" id="GO:0003735">
    <property type="term" value="F:structural constituent of ribosome"/>
    <property type="evidence" value="ECO:0007669"/>
    <property type="project" value="InterPro"/>
</dbReference>
<dbReference type="GO" id="GO:0006412">
    <property type="term" value="P:translation"/>
    <property type="evidence" value="ECO:0007669"/>
    <property type="project" value="UniProtKB-UniRule"/>
</dbReference>
<dbReference type="FunFam" id="1.10.287.3980:FF:000001">
    <property type="entry name" value="Mitochondrial ribosomal protein L34"/>
    <property type="match status" value="1"/>
</dbReference>
<dbReference type="Gene3D" id="1.10.287.3980">
    <property type="match status" value="1"/>
</dbReference>
<dbReference type="HAMAP" id="MF_00391">
    <property type="entry name" value="Ribosomal_bL34"/>
    <property type="match status" value="1"/>
</dbReference>
<dbReference type="InterPro" id="IPR000271">
    <property type="entry name" value="Ribosomal_bL34"/>
</dbReference>
<dbReference type="InterPro" id="IPR020939">
    <property type="entry name" value="Ribosomal_bL34_CS"/>
</dbReference>
<dbReference type="NCBIfam" id="TIGR01030">
    <property type="entry name" value="rpmH_bact"/>
    <property type="match status" value="1"/>
</dbReference>
<dbReference type="PANTHER" id="PTHR14503:SF4">
    <property type="entry name" value="LARGE RIBOSOMAL SUBUNIT PROTEIN BL34M"/>
    <property type="match status" value="1"/>
</dbReference>
<dbReference type="PANTHER" id="PTHR14503">
    <property type="entry name" value="MITOCHONDRIAL RIBOSOMAL PROTEIN 34 FAMILY MEMBER"/>
    <property type="match status" value="1"/>
</dbReference>
<dbReference type="Pfam" id="PF00468">
    <property type="entry name" value="Ribosomal_L34"/>
    <property type="match status" value="1"/>
</dbReference>
<dbReference type="PROSITE" id="PS00784">
    <property type="entry name" value="RIBOSOMAL_L34"/>
    <property type="match status" value="1"/>
</dbReference>
<organism>
    <name type="scientific">Campylobacter fetus subsp. fetus (strain 82-40)</name>
    <dbReference type="NCBI Taxonomy" id="360106"/>
    <lineage>
        <taxon>Bacteria</taxon>
        <taxon>Pseudomonadati</taxon>
        <taxon>Campylobacterota</taxon>
        <taxon>Epsilonproteobacteria</taxon>
        <taxon>Campylobacterales</taxon>
        <taxon>Campylobacteraceae</taxon>
        <taxon>Campylobacter</taxon>
    </lineage>
</organism>
<name>RL34_CAMFF</name>
<sequence length="44" mass="5217">MKRTYQPHKTPKKRTHGFRGRMKTKNGRKVINARRAKGRKRLAA</sequence>
<proteinExistence type="inferred from homology"/>
<comment type="similarity">
    <text evidence="1">Belongs to the bacterial ribosomal protein bL34 family.</text>
</comment>
<feature type="chain" id="PRO_1000013307" description="Large ribosomal subunit protein bL34">
    <location>
        <begin position="1"/>
        <end position="44"/>
    </location>
</feature>
<feature type="region of interest" description="Disordered" evidence="2">
    <location>
        <begin position="1"/>
        <end position="26"/>
    </location>
</feature>
<accession>A0RNF8</accession>
<evidence type="ECO:0000255" key="1">
    <source>
        <dbReference type="HAMAP-Rule" id="MF_00391"/>
    </source>
</evidence>
<evidence type="ECO:0000256" key="2">
    <source>
        <dbReference type="SAM" id="MobiDB-lite"/>
    </source>
</evidence>
<evidence type="ECO:0000305" key="3"/>
<reference key="1">
    <citation type="submission" date="2006-11" db="EMBL/GenBank/DDBJ databases">
        <title>Sequence of Campylobacter fetus subsp. fetus 82-40.</title>
        <authorList>
            <person name="Fouts D.E."/>
            <person name="Nelson K.E."/>
        </authorList>
    </citation>
    <scope>NUCLEOTIDE SEQUENCE [LARGE SCALE GENOMIC DNA]</scope>
    <source>
        <strain>82-40</strain>
    </source>
</reference>
<protein>
    <recommendedName>
        <fullName evidence="1">Large ribosomal subunit protein bL34</fullName>
    </recommendedName>
    <alternativeName>
        <fullName evidence="3">50S ribosomal protein L34</fullName>
    </alternativeName>
</protein>
<gene>
    <name evidence="1" type="primary">rpmH</name>
    <name type="ordered locus">CFF8240_0551</name>
</gene>